<evidence type="ECO:0000250" key="1">
    <source>
        <dbReference type="UniProtKB" id="Q8IVP5"/>
    </source>
</evidence>
<evidence type="ECO:0000255" key="2"/>
<evidence type="ECO:0000305" key="3"/>
<evidence type="ECO:0007744" key="4">
    <source>
    </source>
</evidence>
<gene>
    <name type="primary">Fundc1</name>
</gene>
<reference key="1">
    <citation type="journal article" date="2004" name="Genome Res.">
        <title>The status, quality, and expansion of the NIH full-length cDNA project: the Mammalian Gene Collection (MGC).</title>
        <authorList>
            <consortium name="The MGC Project Team"/>
        </authorList>
    </citation>
    <scope>NUCLEOTIDE SEQUENCE [LARGE SCALE MRNA]</scope>
    <source>
        <tissue>Brain</tissue>
    </source>
</reference>
<reference key="2">
    <citation type="journal article" date="2012" name="Nat. Commun.">
        <title>Quantitative maps of protein phosphorylation sites across 14 different rat organs and tissues.</title>
        <authorList>
            <person name="Lundby A."/>
            <person name="Secher A."/>
            <person name="Lage K."/>
            <person name="Nordsborg N.B."/>
            <person name="Dmytriyev A."/>
            <person name="Lundby C."/>
            <person name="Olsen J.V."/>
        </authorList>
    </citation>
    <scope>PHOSPHORYLATION [LARGE SCALE ANALYSIS] AT SER-13</scope>
    <scope>IDENTIFICATION BY MASS SPECTROMETRY [LARGE SCALE ANALYSIS]</scope>
</reference>
<accession>Q5BJS4</accession>
<sequence length="155" mass="17159">MASRNPPPQDYESDDESYEVLDLTEYARRHHWWNRVFGHSSGPMVEKYSVATQIVMGGVTGWCAGFLFQKVGKLAATAVGGGFLLLQVASHSGYVQIDWKRVEKDVNKAKRQIKKRANKAAPEINNIIEEATDFIKQNIVISSGFVGGFLLGLAS</sequence>
<dbReference type="EMBL" id="BC091353">
    <property type="protein sequence ID" value="AAH91353.1"/>
    <property type="molecule type" value="mRNA"/>
</dbReference>
<dbReference type="RefSeq" id="NP_001020198.1">
    <property type="nucleotide sequence ID" value="NM_001025027.1"/>
</dbReference>
<dbReference type="FunCoup" id="Q5BJS4">
    <property type="interactions" value="1372"/>
</dbReference>
<dbReference type="STRING" id="10116.ENSRNOP00000004676"/>
<dbReference type="iPTMnet" id="Q5BJS4"/>
<dbReference type="PhosphoSitePlus" id="Q5BJS4"/>
<dbReference type="PaxDb" id="10116-ENSRNOP00000004676"/>
<dbReference type="Ensembl" id="ENSRNOT00000004676.7">
    <property type="protein sequence ID" value="ENSRNOP00000004676.5"/>
    <property type="gene ID" value="ENSRNOG00000003470.7"/>
</dbReference>
<dbReference type="GeneID" id="363442"/>
<dbReference type="KEGG" id="rno:363442"/>
<dbReference type="UCSC" id="RGD:1563372">
    <property type="organism name" value="rat"/>
</dbReference>
<dbReference type="AGR" id="RGD:1563372"/>
<dbReference type="CTD" id="139341"/>
<dbReference type="RGD" id="1563372">
    <property type="gene designation" value="Fundc1"/>
</dbReference>
<dbReference type="eggNOG" id="KOG4099">
    <property type="taxonomic scope" value="Eukaryota"/>
</dbReference>
<dbReference type="GeneTree" id="ENSGT00940000154517"/>
<dbReference type="HOGENOM" id="CLU_095425_2_0_1"/>
<dbReference type="InParanoid" id="Q5BJS4"/>
<dbReference type="OMA" id="NAPPQEY"/>
<dbReference type="OrthoDB" id="163794at2759"/>
<dbReference type="PhylomeDB" id="Q5BJS4"/>
<dbReference type="TreeFam" id="TF300280"/>
<dbReference type="Reactome" id="R-RNO-8934903">
    <property type="pathway name" value="Receptor Mediated Mitophagy"/>
</dbReference>
<dbReference type="PRO" id="PR:Q5BJS4"/>
<dbReference type="Proteomes" id="UP000002494">
    <property type="component" value="Chromosome X"/>
</dbReference>
<dbReference type="Bgee" id="ENSRNOG00000003470">
    <property type="expression patterns" value="Expressed in thymus and 20 other cell types or tissues"/>
</dbReference>
<dbReference type="GO" id="GO:0005741">
    <property type="term" value="C:mitochondrial outer membrane"/>
    <property type="evidence" value="ECO:0000250"/>
    <property type="project" value="UniProtKB"/>
</dbReference>
<dbReference type="GO" id="GO:0000422">
    <property type="term" value="P:autophagy of mitochondrion"/>
    <property type="evidence" value="ECO:0000250"/>
    <property type="project" value="UniProtKB"/>
</dbReference>
<dbReference type="GO" id="GO:0008053">
    <property type="term" value="P:mitochondrial fusion"/>
    <property type="evidence" value="ECO:0000266"/>
    <property type="project" value="RGD"/>
</dbReference>
<dbReference type="GO" id="GO:0000423">
    <property type="term" value="P:mitophagy"/>
    <property type="evidence" value="ECO:0000266"/>
    <property type="project" value="RGD"/>
</dbReference>
<dbReference type="GO" id="GO:0001666">
    <property type="term" value="P:response to hypoxia"/>
    <property type="evidence" value="ECO:0000250"/>
    <property type="project" value="UniProtKB"/>
</dbReference>
<dbReference type="InterPro" id="IPR007014">
    <property type="entry name" value="FUN14"/>
</dbReference>
<dbReference type="PANTHER" id="PTHR21346">
    <property type="entry name" value="FUN14 DOMAIN CONTAINING"/>
    <property type="match status" value="1"/>
</dbReference>
<dbReference type="PANTHER" id="PTHR21346:SF2">
    <property type="entry name" value="FUN14 DOMAIN-CONTAINING PROTEIN 1"/>
    <property type="match status" value="1"/>
</dbReference>
<dbReference type="Pfam" id="PF04930">
    <property type="entry name" value="FUN14"/>
    <property type="match status" value="1"/>
</dbReference>
<name>FUND1_RAT</name>
<comment type="function">
    <text evidence="1">Integral mitochondrial outer-membrane protein that mediates the formation of mitochondria-associated endoplasmic reticulum membranes (MAMs). In turn, mediates angiogenesis and neoangiogenesis through interference with intracellular Ca(2+) communication and regulation of the vascular endothelial growth factor receptor KDR/VEGFR2 expression at both mRNA and protein levels. Also acts as an activator of hypoxia-induced mitophagy, an important mechanism for mitochondrial quality and homeostasis, by interacting with and recruiting LC3 protein family to mitochondria. Mechanistically, recruits DRP1 at ER-mitochondria contact sites leading to DRP1 oligomerization and GTPase activity to facilitate mitochondrial fission during hypoxia. Additionally, plays a role in hepatic ferroptosis by interacting directly with glutathione peroxidase/GPX4 to facilitate its recruitment into mitochondria through TOM/TIM complex where it is degraded by mitophagy.</text>
</comment>
<comment type="subunit">
    <text evidence="1">Interacts (via YXXL motif) with MAP1 LC3 family proteins MAP1LC3A, MAP1LC3B and GABARAP. Interacts with DNM1L/DPR1. Interacts with GPX4.</text>
</comment>
<comment type="subcellular location">
    <subcellularLocation>
        <location evidence="1">Mitochondrion outer membrane</location>
        <topology evidence="1">Multi-pass membrane protein</topology>
    </subcellularLocation>
</comment>
<comment type="domain">
    <text evidence="1">The YXXL motif mediates the interaction with MAP1 LC3 family proteins MAP1LC3A, MAP1LC3B and GABARAP.</text>
</comment>
<comment type="PTM">
    <text evidence="1">Phosphorylation at Ser-13 by CK2 and at Tyr-18 by SRC inhibits activation of mitophagy. Following hypoxia, dephosphorylated at Tyr-18, leading to interaction with MAP1 LC3 family proteins and triggering mitophagy. Dephosphorylation is mediated by PGAM5. Phosphorylated by ULK1 at Ser-17 which enhances FUNDC1 binding to LC3.</text>
</comment>
<comment type="PTM">
    <text evidence="1">Ubiquitinated on Lys-119. Deubiquitinated by USP19; leading to hypoxia-induced DRP1 oligomerization and GTPase activity.</text>
</comment>
<comment type="similarity">
    <text evidence="3">Belongs to the FUN14 family.</text>
</comment>
<feature type="chain" id="PRO_0000271347" description="FUN14 domain-containing protein 1">
    <location>
        <begin position="1"/>
        <end position="155"/>
    </location>
</feature>
<feature type="topological domain" description="Cytoplasmic" evidence="2">
    <location>
        <begin position="1"/>
        <end position="47"/>
    </location>
</feature>
<feature type="transmembrane region" description="Helical" evidence="2">
    <location>
        <begin position="48"/>
        <end position="68"/>
    </location>
</feature>
<feature type="topological domain" description="Mitochondrial intermembrane" evidence="2">
    <location>
        <begin position="69"/>
        <end position="74"/>
    </location>
</feature>
<feature type="transmembrane region" description="Helical" evidence="2">
    <location>
        <begin position="75"/>
        <end position="95"/>
    </location>
</feature>
<feature type="topological domain" description="Cytoplasmic" evidence="2">
    <location>
        <begin position="96"/>
        <end position="133"/>
    </location>
</feature>
<feature type="transmembrane region" description="Helical" evidence="2">
    <location>
        <begin position="134"/>
        <end position="154"/>
    </location>
</feature>
<feature type="topological domain" description="Mitochondrial intermembrane" evidence="2">
    <location>
        <position position="155"/>
    </location>
</feature>
<feature type="short sequence motif" description="YXXL">
    <location>
        <begin position="18"/>
        <end position="21"/>
    </location>
</feature>
<feature type="modified residue" description="Phosphoserine" evidence="4">
    <location>
        <position position="13"/>
    </location>
</feature>
<feature type="modified residue" description="Phosphoserine" evidence="1">
    <location>
        <position position="17"/>
    </location>
</feature>
<feature type="modified residue" description="Phosphotyrosine; by SRC" evidence="1">
    <location>
        <position position="18"/>
    </location>
</feature>
<feature type="cross-link" description="Glycyl lysine isopeptide (Lys-Gly) (interchain with G-Cter in ubiquitin)" evidence="1">
    <location>
        <position position="119"/>
    </location>
</feature>
<organism>
    <name type="scientific">Rattus norvegicus</name>
    <name type="common">Rat</name>
    <dbReference type="NCBI Taxonomy" id="10116"/>
    <lineage>
        <taxon>Eukaryota</taxon>
        <taxon>Metazoa</taxon>
        <taxon>Chordata</taxon>
        <taxon>Craniata</taxon>
        <taxon>Vertebrata</taxon>
        <taxon>Euteleostomi</taxon>
        <taxon>Mammalia</taxon>
        <taxon>Eutheria</taxon>
        <taxon>Euarchontoglires</taxon>
        <taxon>Glires</taxon>
        <taxon>Rodentia</taxon>
        <taxon>Myomorpha</taxon>
        <taxon>Muroidea</taxon>
        <taxon>Muridae</taxon>
        <taxon>Murinae</taxon>
        <taxon>Rattus</taxon>
    </lineage>
</organism>
<proteinExistence type="evidence at protein level"/>
<keyword id="KW-0072">Autophagy</keyword>
<keyword id="KW-1017">Isopeptide bond</keyword>
<keyword id="KW-0472">Membrane</keyword>
<keyword id="KW-0496">Mitochondrion</keyword>
<keyword id="KW-1000">Mitochondrion outer membrane</keyword>
<keyword id="KW-0597">Phosphoprotein</keyword>
<keyword id="KW-1185">Reference proteome</keyword>
<keyword id="KW-0812">Transmembrane</keyword>
<keyword id="KW-1133">Transmembrane helix</keyword>
<keyword id="KW-0832">Ubl conjugation</keyword>
<protein>
    <recommendedName>
        <fullName>FUN14 domain-containing protein 1</fullName>
    </recommendedName>
</protein>